<proteinExistence type="evidence at protein level"/>
<gene>
    <name type="primary">BUD31</name>
    <name type="synonym">EDG2</name>
</gene>
<organism>
    <name type="scientific">Homo sapiens</name>
    <name type="common">Human</name>
    <dbReference type="NCBI Taxonomy" id="9606"/>
    <lineage>
        <taxon>Eukaryota</taxon>
        <taxon>Metazoa</taxon>
        <taxon>Chordata</taxon>
        <taxon>Craniata</taxon>
        <taxon>Vertebrata</taxon>
        <taxon>Euteleostomi</taxon>
        <taxon>Mammalia</taxon>
        <taxon>Eutheria</taxon>
        <taxon>Euarchontoglires</taxon>
        <taxon>Primates</taxon>
        <taxon>Haplorrhini</taxon>
        <taxon>Catarrhini</taxon>
        <taxon>Hominidae</taxon>
        <taxon>Homo</taxon>
    </lineage>
</organism>
<feature type="chain" id="PRO_0000193897" description="Protein BUD31 homolog">
    <location>
        <begin position="1"/>
        <end position="144"/>
    </location>
</feature>
<feature type="region of interest" description="Interaction with AR" evidence="3">
    <location>
        <begin position="59"/>
        <end position="67"/>
    </location>
</feature>
<feature type="short sequence motif" description="Nuclear localization signal" evidence="1">
    <location>
        <begin position="2"/>
        <end position="10"/>
    </location>
</feature>
<feature type="modified residue" description="N6-acetyllysine" evidence="15">
    <location>
        <position position="125"/>
    </location>
</feature>
<feature type="splice variant" id="VSP_055558" description="In isoform 2." evidence="5">
    <original>GRIIECTHCGCRGCSG</original>
    <variation>VMSDTQAWCCFQLKILP</variation>
    <location>
        <begin position="129"/>
        <end position="144"/>
    </location>
</feature>
<feature type="sequence conflict" description="In Ref. 1; AAA20008/AAB33291." evidence="8" ref="1">
    <original>P</original>
    <variation>Q</variation>
    <location>
        <position position="12"/>
    </location>
</feature>
<feature type="sequence conflict" description="In Ref. 1; AAA20008/AAB33291." evidence="8" ref="1">
    <original>E</original>
    <variation>Q</variation>
    <location>
        <position position="24"/>
    </location>
</feature>
<feature type="sequence conflict" description="In Ref. 1; AAA20008/AAB33291." evidence="8" ref="1">
    <original>I</original>
    <variation>Y</variation>
    <location>
        <position position="70"/>
    </location>
</feature>
<feature type="sequence conflict" description="In Ref. 1; AAA20008." evidence="8" ref="1">
    <original>YEYCI</original>
    <variation>LDICY</variation>
    <location>
        <begin position="75"/>
        <end position="79"/>
    </location>
</feature>
<feature type="sequence conflict" description="In Ref. 1; AAA20008/AAB33291." evidence="8" ref="1">
    <original>Y</original>
    <variation>L</variation>
    <location>
        <position position="83"/>
    </location>
</feature>
<feature type="sequence conflict" description="In Ref. 1; AAA20008/AAB33291." evidence="8" ref="1">
    <original>I</original>
    <variation>L</variation>
    <location>
        <position position="89"/>
    </location>
</feature>
<feature type="sequence conflict" description="In Ref. 1; AAA20008/AAB33291." evidence="8" ref="1">
    <original>YE</original>
    <variation>IG</variation>
    <location>
        <begin position="97"/>
        <end position="98"/>
    </location>
</feature>
<feature type="helix" evidence="18">
    <location>
        <begin position="13"/>
        <end position="17"/>
    </location>
</feature>
<feature type="helix" evidence="18">
    <location>
        <begin position="19"/>
        <end position="33"/>
    </location>
</feature>
<feature type="strand" evidence="18">
    <location>
        <begin position="38"/>
        <end position="40"/>
    </location>
</feature>
<feature type="helix" evidence="18">
    <location>
        <begin position="44"/>
        <end position="46"/>
    </location>
</feature>
<feature type="helix" evidence="16">
    <location>
        <begin position="60"/>
        <end position="65"/>
    </location>
</feature>
<feature type="helix" evidence="18">
    <location>
        <begin position="72"/>
        <end position="80"/>
    </location>
</feature>
<feature type="helix" evidence="18">
    <location>
        <begin position="86"/>
        <end position="92"/>
    </location>
</feature>
<feature type="strand" evidence="18">
    <location>
        <begin position="94"/>
        <end position="96"/>
    </location>
</feature>
<feature type="helix" evidence="17">
    <location>
        <begin position="104"/>
        <end position="106"/>
    </location>
</feature>
<feature type="strand" evidence="18">
    <location>
        <begin position="110"/>
        <end position="114"/>
    </location>
</feature>
<feature type="helix" evidence="18">
    <location>
        <begin position="118"/>
        <end position="120"/>
    </location>
</feature>
<feature type="helix" evidence="18">
    <location>
        <begin position="123"/>
        <end position="125"/>
    </location>
</feature>
<feature type="turn" evidence="18">
    <location>
        <begin position="135"/>
        <end position="137"/>
    </location>
</feature>
<name>BUD31_HUMAN</name>
<keyword id="KW-0002">3D-structure</keyword>
<keyword id="KW-0007">Acetylation</keyword>
<keyword id="KW-0025">Alternative splicing</keyword>
<keyword id="KW-0507">mRNA processing</keyword>
<keyword id="KW-0508">mRNA splicing</keyword>
<keyword id="KW-0539">Nucleus</keyword>
<keyword id="KW-1267">Proteomics identification</keyword>
<keyword id="KW-1185">Reference proteome</keyword>
<keyword id="KW-0747">Spliceosome</keyword>
<keyword id="KW-0804">Transcription</keyword>
<keyword id="KW-0805">Transcription regulation</keyword>
<evidence type="ECO:0000255" key="1"/>
<evidence type="ECO:0000269" key="2">
    <source>
    </source>
</evidence>
<evidence type="ECO:0000269" key="3">
    <source>
    </source>
</evidence>
<evidence type="ECO:0000269" key="4">
    <source>
    </source>
</evidence>
<evidence type="ECO:0000303" key="5">
    <source>
    </source>
</evidence>
<evidence type="ECO:0000303" key="6">
    <source>
    </source>
</evidence>
<evidence type="ECO:0000303" key="7">
    <source>
    </source>
</evidence>
<evidence type="ECO:0000305" key="8"/>
<evidence type="ECO:0000305" key="9">
    <source>
    </source>
</evidence>
<evidence type="ECO:0007744" key="10">
    <source>
        <dbReference type="PDB" id="4OED"/>
    </source>
</evidence>
<evidence type="ECO:0007744" key="11">
    <source>
        <dbReference type="PDB" id="4OH6"/>
    </source>
</evidence>
<evidence type="ECO:0007744" key="12">
    <source>
        <dbReference type="PDB" id="4OKB"/>
    </source>
</evidence>
<evidence type="ECO:0007744" key="13">
    <source>
        <dbReference type="PDB" id="5MQF"/>
    </source>
</evidence>
<evidence type="ECO:0007744" key="14">
    <source>
        <dbReference type="PDB" id="5XJC"/>
    </source>
</evidence>
<evidence type="ECO:0007744" key="15">
    <source>
    </source>
</evidence>
<evidence type="ECO:0007829" key="16">
    <source>
        <dbReference type="PDB" id="4OED"/>
    </source>
</evidence>
<evidence type="ECO:0007829" key="17">
    <source>
        <dbReference type="PDB" id="6ID0"/>
    </source>
</evidence>
<evidence type="ECO:0007829" key="18">
    <source>
        <dbReference type="PDB" id="6ID1"/>
    </source>
</evidence>
<reference key="1">
    <citation type="journal article" date="1995" name="Biochim. Biophys. Acta">
        <title>Characterization of edg-2, a human homologue of the Xenopus maternal transcript G10 from endothelial cells.</title>
        <authorList>
            <person name="Hla T."/>
            <person name="Jackson A.Q."/>
            <person name="Appleby S.B."/>
            <person name="Maciag T."/>
        </authorList>
    </citation>
    <scope>NUCLEOTIDE SEQUENCE [MRNA] (ISOFORM 1)</scope>
</reference>
<reference key="2">
    <citation type="journal article" date="2004" name="Nat. Genet.">
        <title>Complete sequencing and characterization of 21,243 full-length human cDNAs.</title>
        <authorList>
            <person name="Ota T."/>
            <person name="Suzuki Y."/>
            <person name="Nishikawa T."/>
            <person name="Otsuki T."/>
            <person name="Sugiyama T."/>
            <person name="Irie R."/>
            <person name="Wakamatsu A."/>
            <person name="Hayashi K."/>
            <person name="Sato H."/>
            <person name="Nagai K."/>
            <person name="Kimura K."/>
            <person name="Makita H."/>
            <person name="Sekine M."/>
            <person name="Obayashi M."/>
            <person name="Nishi T."/>
            <person name="Shibahara T."/>
            <person name="Tanaka T."/>
            <person name="Ishii S."/>
            <person name="Yamamoto J."/>
            <person name="Saito K."/>
            <person name="Kawai Y."/>
            <person name="Isono Y."/>
            <person name="Nakamura Y."/>
            <person name="Nagahari K."/>
            <person name="Murakami K."/>
            <person name="Yasuda T."/>
            <person name="Iwayanagi T."/>
            <person name="Wagatsuma M."/>
            <person name="Shiratori A."/>
            <person name="Sudo H."/>
            <person name="Hosoiri T."/>
            <person name="Kaku Y."/>
            <person name="Kodaira H."/>
            <person name="Kondo H."/>
            <person name="Sugawara M."/>
            <person name="Takahashi M."/>
            <person name="Kanda K."/>
            <person name="Yokoi T."/>
            <person name="Furuya T."/>
            <person name="Kikkawa E."/>
            <person name="Omura Y."/>
            <person name="Abe K."/>
            <person name="Kamihara K."/>
            <person name="Katsuta N."/>
            <person name="Sato K."/>
            <person name="Tanikawa M."/>
            <person name="Yamazaki M."/>
            <person name="Ninomiya K."/>
            <person name="Ishibashi T."/>
            <person name="Yamashita H."/>
            <person name="Murakawa K."/>
            <person name="Fujimori K."/>
            <person name="Tanai H."/>
            <person name="Kimata M."/>
            <person name="Watanabe M."/>
            <person name="Hiraoka S."/>
            <person name="Chiba Y."/>
            <person name="Ishida S."/>
            <person name="Ono Y."/>
            <person name="Takiguchi S."/>
            <person name="Watanabe S."/>
            <person name="Yosida M."/>
            <person name="Hotuta T."/>
            <person name="Kusano J."/>
            <person name="Kanehori K."/>
            <person name="Takahashi-Fujii A."/>
            <person name="Hara H."/>
            <person name="Tanase T.-O."/>
            <person name="Nomura Y."/>
            <person name="Togiya S."/>
            <person name="Komai F."/>
            <person name="Hara R."/>
            <person name="Takeuchi K."/>
            <person name="Arita M."/>
            <person name="Imose N."/>
            <person name="Musashino K."/>
            <person name="Yuuki H."/>
            <person name="Oshima A."/>
            <person name="Sasaki N."/>
            <person name="Aotsuka S."/>
            <person name="Yoshikawa Y."/>
            <person name="Matsunawa H."/>
            <person name="Ichihara T."/>
            <person name="Shiohata N."/>
            <person name="Sano S."/>
            <person name="Moriya S."/>
            <person name="Momiyama H."/>
            <person name="Satoh N."/>
            <person name="Takami S."/>
            <person name="Terashima Y."/>
            <person name="Suzuki O."/>
            <person name="Nakagawa S."/>
            <person name="Senoh A."/>
            <person name="Mizoguchi H."/>
            <person name="Goto Y."/>
            <person name="Shimizu F."/>
            <person name="Wakebe H."/>
            <person name="Hishigaki H."/>
            <person name="Watanabe T."/>
            <person name="Sugiyama A."/>
            <person name="Takemoto M."/>
            <person name="Kawakami B."/>
            <person name="Yamazaki M."/>
            <person name="Watanabe K."/>
            <person name="Kumagai A."/>
            <person name="Itakura S."/>
            <person name="Fukuzumi Y."/>
            <person name="Fujimori Y."/>
            <person name="Komiyama M."/>
            <person name="Tashiro H."/>
            <person name="Tanigami A."/>
            <person name="Fujiwara T."/>
            <person name="Ono T."/>
            <person name="Yamada K."/>
            <person name="Fujii Y."/>
            <person name="Ozaki K."/>
            <person name="Hirao M."/>
            <person name="Ohmori Y."/>
            <person name="Kawabata A."/>
            <person name="Hikiji T."/>
            <person name="Kobatake N."/>
            <person name="Inagaki H."/>
            <person name="Ikema Y."/>
            <person name="Okamoto S."/>
            <person name="Okitani R."/>
            <person name="Kawakami T."/>
            <person name="Noguchi S."/>
            <person name="Itoh T."/>
            <person name="Shigeta K."/>
            <person name="Senba T."/>
            <person name="Matsumura K."/>
            <person name="Nakajima Y."/>
            <person name="Mizuno T."/>
            <person name="Morinaga M."/>
            <person name="Sasaki M."/>
            <person name="Togashi T."/>
            <person name="Oyama M."/>
            <person name="Hata H."/>
            <person name="Watanabe M."/>
            <person name="Komatsu T."/>
            <person name="Mizushima-Sugano J."/>
            <person name="Satoh T."/>
            <person name="Shirai Y."/>
            <person name="Takahashi Y."/>
            <person name="Nakagawa K."/>
            <person name="Okumura K."/>
            <person name="Nagase T."/>
            <person name="Nomura N."/>
            <person name="Kikuchi H."/>
            <person name="Masuho Y."/>
            <person name="Yamashita R."/>
            <person name="Nakai K."/>
            <person name="Yada T."/>
            <person name="Nakamura Y."/>
            <person name="Ohara O."/>
            <person name="Isogai T."/>
            <person name="Sugano S."/>
        </authorList>
    </citation>
    <scope>NUCLEOTIDE SEQUENCE [LARGE SCALE MRNA] (ISOFORM 2)</scope>
    <source>
        <tissue>Thymus</tissue>
    </source>
</reference>
<reference key="3">
    <citation type="submission" date="2004-06" db="EMBL/GenBank/DDBJ databases">
        <title>Cloning of human full open reading frames in Gateway(TM) system entry vector (pDONR201).</title>
        <authorList>
            <person name="Ebert L."/>
            <person name="Schick M."/>
            <person name="Neubert P."/>
            <person name="Schatten R."/>
            <person name="Henze S."/>
            <person name="Korn B."/>
        </authorList>
    </citation>
    <scope>NUCLEOTIDE SEQUENCE [LARGE SCALE MRNA] (ISOFORM 1)</scope>
</reference>
<reference key="4">
    <citation type="journal article" date="2003" name="Science">
        <title>Human chromosome 7: DNA sequence and biology.</title>
        <authorList>
            <person name="Scherer S.W."/>
            <person name="Cheung J."/>
            <person name="MacDonald J.R."/>
            <person name="Osborne L.R."/>
            <person name="Nakabayashi K."/>
            <person name="Herbrick J.-A."/>
            <person name="Carson A.R."/>
            <person name="Parker-Katiraee L."/>
            <person name="Skaug J."/>
            <person name="Khaja R."/>
            <person name="Zhang J."/>
            <person name="Hudek A.K."/>
            <person name="Li M."/>
            <person name="Haddad M."/>
            <person name="Duggan G.E."/>
            <person name="Fernandez B.A."/>
            <person name="Kanematsu E."/>
            <person name="Gentles S."/>
            <person name="Christopoulos C.C."/>
            <person name="Choufani S."/>
            <person name="Kwasnicka D."/>
            <person name="Zheng X.H."/>
            <person name="Lai Z."/>
            <person name="Nusskern D.R."/>
            <person name="Zhang Q."/>
            <person name="Gu Z."/>
            <person name="Lu F."/>
            <person name="Zeesman S."/>
            <person name="Nowaczyk M.J."/>
            <person name="Teshima I."/>
            <person name="Chitayat D."/>
            <person name="Shuman C."/>
            <person name="Weksberg R."/>
            <person name="Zackai E.H."/>
            <person name="Grebe T.A."/>
            <person name="Cox S.R."/>
            <person name="Kirkpatrick S.J."/>
            <person name="Rahman N."/>
            <person name="Friedman J.M."/>
            <person name="Heng H.H.Q."/>
            <person name="Pelicci P.G."/>
            <person name="Lo-Coco F."/>
            <person name="Belloni E."/>
            <person name="Shaffer L.G."/>
            <person name="Pober B."/>
            <person name="Morton C.C."/>
            <person name="Gusella J.F."/>
            <person name="Bruns G.A.P."/>
            <person name="Korf B.R."/>
            <person name="Quade B.J."/>
            <person name="Ligon A.H."/>
            <person name="Ferguson H."/>
            <person name="Higgins A.W."/>
            <person name="Leach N.T."/>
            <person name="Herrick S.R."/>
            <person name="Lemyre E."/>
            <person name="Farra C.G."/>
            <person name="Kim H.-G."/>
            <person name="Summers A.M."/>
            <person name="Gripp K.W."/>
            <person name="Roberts W."/>
            <person name="Szatmari P."/>
            <person name="Winsor E.J.T."/>
            <person name="Grzeschik K.-H."/>
            <person name="Teebi A."/>
            <person name="Minassian B.A."/>
            <person name="Kere J."/>
            <person name="Armengol L."/>
            <person name="Pujana M.A."/>
            <person name="Estivill X."/>
            <person name="Wilson M.D."/>
            <person name="Koop B.F."/>
            <person name="Tosi S."/>
            <person name="Moore G.E."/>
            <person name="Boright A.P."/>
            <person name="Zlotorynski E."/>
            <person name="Kerem B."/>
            <person name="Kroisel P.M."/>
            <person name="Petek E."/>
            <person name="Oscier D.G."/>
            <person name="Mould S.J."/>
            <person name="Doehner H."/>
            <person name="Doehner K."/>
            <person name="Rommens J.M."/>
            <person name="Vincent J.B."/>
            <person name="Venter J.C."/>
            <person name="Li P.W."/>
            <person name="Mural R.J."/>
            <person name="Adams M.D."/>
            <person name="Tsui L.-C."/>
        </authorList>
    </citation>
    <scope>NUCLEOTIDE SEQUENCE [LARGE SCALE GENOMIC DNA]</scope>
</reference>
<reference key="5">
    <citation type="submission" date="2005-09" db="EMBL/GenBank/DDBJ databases">
        <authorList>
            <person name="Mural R.J."/>
            <person name="Istrail S."/>
            <person name="Sutton G.G."/>
            <person name="Florea L."/>
            <person name="Halpern A.L."/>
            <person name="Mobarry C.M."/>
            <person name="Lippert R."/>
            <person name="Walenz B."/>
            <person name="Shatkay H."/>
            <person name="Dew I."/>
            <person name="Miller J.R."/>
            <person name="Flanigan M.J."/>
            <person name="Edwards N.J."/>
            <person name="Bolanos R."/>
            <person name="Fasulo D."/>
            <person name="Halldorsson B.V."/>
            <person name="Hannenhalli S."/>
            <person name="Turner R."/>
            <person name="Yooseph S."/>
            <person name="Lu F."/>
            <person name="Nusskern D.R."/>
            <person name="Shue B.C."/>
            <person name="Zheng X.H."/>
            <person name="Zhong F."/>
            <person name="Delcher A.L."/>
            <person name="Huson D.H."/>
            <person name="Kravitz S.A."/>
            <person name="Mouchard L."/>
            <person name="Reinert K."/>
            <person name="Remington K.A."/>
            <person name="Clark A.G."/>
            <person name="Waterman M.S."/>
            <person name="Eichler E.E."/>
            <person name="Adams M.D."/>
            <person name="Hunkapiller M.W."/>
            <person name="Myers E.W."/>
            <person name="Venter J.C."/>
        </authorList>
    </citation>
    <scope>NUCLEOTIDE SEQUENCE [LARGE SCALE GENOMIC DNA]</scope>
</reference>
<reference key="6">
    <citation type="journal article" date="2003" name="Nature">
        <title>The DNA sequence of human chromosome 7.</title>
        <authorList>
            <person name="Hillier L.W."/>
            <person name="Fulton R.S."/>
            <person name="Fulton L.A."/>
            <person name="Graves T.A."/>
            <person name="Pepin K.H."/>
            <person name="Wagner-McPherson C."/>
            <person name="Layman D."/>
            <person name="Maas J."/>
            <person name="Jaeger S."/>
            <person name="Walker R."/>
            <person name="Wylie K."/>
            <person name="Sekhon M."/>
            <person name="Becker M.C."/>
            <person name="O'Laughlin M.D."/>
            <person name="Schaller M.E."/>
            <person name="Fewell G.A."/>
            <person name="Delehaunty K.D."/>
            <person name="Miner T.L."/>
            <person name="Nash W.E."/>
            <person name="Cordes M."/>
            <person name="Du H."/>
            <person name="Sun H."/>
            <person name="Edwards J."/>
            <person name="Bradshaw-Cordum H."/>
            <person name="Ali J."/>
            <person name="Andrews S."/>
            <person name="Isak A."/>
            <person name="Vanbrunt A."/>
            <person name="Nguyen C."/>
            <person name="Du F."/>
            <person name="Lamar B."/>
            <person name="Courtney L."/>
            <person name="Kalicki J."/>
            <person name="Ozersky P."/>
            <person name="Bielicki L."/>
            <person name="Scott K."/>
            <person name="Holmes A."/>
            <person name="Harkins R."/>
            <person name="Harris A."/>
            <person name="Strong C.M."/>
            <person name="Hou S."/>
            <person name="Tomlinson C."/>
            <person name="Dauphin-Kohlberg S."/>
            <person name="Kozlowicz-Reilly A."/>
            <person name="Leonard S."/>
            <person name="Rohlfing T."/>
            <person name="Rock S.M."/>
            <person name="Tin-Wollam A.-M."/>
            <person name="Abbott A."/>
            <person name="Minx P."/>
            <person name="Maupin R."/>
            <person name="Strowmatt C."/>
            <person name="Latreille P."/>
            <person name="Miller N."/>
            <person name="Johnson D."/>
            <person name="Murray J."/>
            <person name="Woessner J.P."/>
            <person name="Wendl M.C."/>
            <person name="Yang S.-P."/>
            <person name="Schultz B.R."/>
            <person name="Wallis J.W."/>
            <person name="Spieth J."/>
            <person name="Bieri T.A."/>
            <person name="Nelson J.O."/>
            <person name="Berkowicz N."/>
            <person name="Wohldmann P.E."/>
            <person name="Cook L.L."/>
            <person name="Hickenbotham M.T."/>
            <person name="Eldred J."/>
            <person name="Williams D."/>
            <person name="Bedell J.A."/>
            <person name="Mardis E.R."/>
            <person name="Clifton S.W."/>
            <person name="Chissoe S.L."/>
            <person name="Marra M.A."/>
            <person name="Raymond C."/>
            <person name="Haugen E."/>
            <person name="Gillett W."/>
            <person name="Zhou Y."/>
            <person name="James R."/>
            <person name="Phelps K."/>
            <person name="Iadanoto S."/>
            <person name="Bubb K."/>
            <person name="Simms E."/>
            <person name="Levy R."/>
            <person name="Clendenning J."/>
            <person name="Kaul R."/>
            <person name="Kent W.J."/>
            <person name="Furey T.S."/>
            <person name="Baertsch R.A."/>
            <person name="Brent M.R."/>
            <person name="Keibler E."/>
            <person name="Flicek P."/>
            <person name="Bork P."/>
            <person name="Suyama M."/>
            <person name="Bailey J.A."/>
            <person name="Portnoy M.E."/>
            <person name="Torrents D."/>
            <person name="Chinwalla A.T."/>
            <person name="Gish W.R."/>
            <person name="Eddy S.R."/>
            <person name="McPherson J.D."/>
            <person name="Olson M.V."/>
            <person name="Eichler E.E."/>
            <person name="Green E.D."/>
            <person name="Waterston R.H."/>
            <person name="Wilson R.K."/>
        </authorList>
    </citation>
    <scope>NUCLEOTIDE SEQUENCE [LARGE SCALE GENOMIC DNA]</scope>
</reference>
<reference key="7">
    <citation type="journal article" date="2004" name="Genome Res.">
        <title>The status, quality, and expansion of the NIH full-length cDNA project: the Mammalian Gene Collection (MGC).</title>
        <authorList>
            <consortium name="The MGC Project Team"/>
        </authorList>
    </citation>
    <scope>NUCLEOTIDE SEQUENCE [LARGE SCALE MRNA] (ISOFORM 1)</scope>
    <source>
        <tissue>Lymph</tissue>
    </source>
</reference>
<reference key="8">
    <citation type="journal article" date="2009" name="Science">
        <title>Lysine acetylation targets protein complexes and co-regulates major cellular functions.</title>
        <authorList>
            <person name="Choudhary C."/>
            <person name="Kumar C."/>
            <person name="Gnad F."/>
            <person name="Nielsen M.L."/>
            <person name="Rehman M."/>
            <person name="Walther T.C."/>
            <person name="Olsen J.V."/>
            <person name="Mann M."/>
        </authorList>
    </citation>
    <scope>ACETYLATION [LARGE SCALE ANALYSIS] AT LYS-125</scope>
    <scope>IDENTIFICATION BY MASS SPECTROMETRY [LARGE SCALE ANALYSIS]</scope>
</reference>
<reference key="9">
    <citation type="journal article" date="2011" name="BMC Syst. Biol.">
        <title>Initial characterization of the human central proteome.</title>
        <authorList>
            <person name="Burkard T.R."/>
            <person name="Planyavsky M."/>
            <person name="Kaupe I."/>
            <person name="Breitwieser F.P."/>
            <person name="Buerckstuemmer T."/>
            <person name="Bennett K.L."/>
            <person name="Superti-Furga G."/>
            <person name="Colinge J."/>
        </authorList>
    </citation>
    <scope>IDENTIFICATION BY MASS SPECTROMETRY [LARGE SCALE ANALYSIS]</scope>
</reference>
<reference evidence="10 11 12" key="10">
    <citation type="journal article" date="2014" name="Mol. Oncol.">
        <title>Identification of a new androgen receptor (AR) co-regulator BUD31 and related peptides to suppress wild-type and mutated AR-mediated prostate cancer growth via peptide screening and X-ray structure analysis.</title>
        <authorList>
            <person name="Hsu C.L."/>
            <person name="Liu J.S."/>
            <person name="Wu P.L."/>
            <person name="Guan H.H."/>
            <person name="Chen Y.L."/>
            <person name="Lin A.C."/>
            <person name="Ting H.J."/>
            <person name="Pang S.T."/>
            <person name="Yeh S.D."/>
            <person name="Ma W.L."/>
            <person name="Chen C.J."/>
            <person name="Wu W.G."/>
            <person name="Chang C."/>
        </authorList>
    </citation>
    <scope>X-RAY CRYSTALLOGRAPHY (2.79 ANGSTROMS) OF 56-70 IN COMPLEX WITH AR</scope>
    <scope>FUNCTION</scope>
    <scope>SUBCELLULAR LOCATION</scope>
    <scope>INTERACTION WITH AR</scope>
    <scope>DOMAIN</scope>
    <scope>TISSUE SPECIFICITY</scope>
</reference>
<reference evidence="14" key="11">
    <citation type="journal article" date="2017" name="Cell">
        <title>An Atomic Structure of the Human Spliceosome.</title>
        <authorList>
            <person name="Zhang X."/>
            <person name="Yan C."/>
            <person name="Hang J."/>
            <person name="Finci L.I."/>
            <person name="Lei J."/>
            <person name="Shi Y."/>
        </authorList>
    </citation>
    <scope>STRUCTURE BY ELECTRON MICROSCOPY (3.60 ANGSTROMS)</scope>
    <scope>FUNCTION</scope>
    <scope>SUBUNIT</scope>
    <scope>SUBCELLULAR LOCATION</scope>
</reference>
<reference evidence="13" key="12">
    <citation type="journal article" date="2017" name="Nature">
        <title>Cryo-EM structure of a human spliceosome activated for step 2 of splicing.</title>
        <authorList>
            <person name="Bertram K."/>
            <person name="Agafonov D.E."/>
            <person name="Liu W.T."/>
            <person name="Dybkov O."/>
            <person name="Will C.L."/>
            <person name="Hartmuth K."/>
            <person name="Urlaub H."/>
            <person name="Kastner B."/>
            <person name="Stark H."/>
            <person name="Luhrmann R."/>
        </authorList>
    </citation>
    <scope>STRUCTURE BY ELECTRON MICROSCOPY (5.90 ANGSTROMS)</scope>
    <scope>FUNCTION</scope>
    <scope>SUBUNIT</scope>
    <scope>SUBCELLULAR LOCATION</scope>
    <scope>IDENTIFICATION BY MASS SPECTROMETRY</scope>
</reference>
<protein>
    <recommendedName>
        <fullName evidence="6">Protein BUD31 homolog</fullName>
    </recommendedName>
    <alternativeName>
        <fullName evidence="7">Protein EDG-2</fullName>
    </alternativeName>
    <alternativeName>
        <fullName evidence="7">Protein G10 homolog</fullName>
    </alternativeName>
</protein>
<comment type="function">
    <text evidence="3 4 9">Involved in the pre-mRNA splicing process (PubMed:28076346, PubMed:28502770). May play a role as regulator of AR transcriptional activity; may increase AR transcriptional activity (PubMed:25091737).</text>
</comment>
<comment type="subunit">
    <text evidence="3 4 9">Identified in the spliceosome C complex (PubMed:28076346, PubMed:28502770). May interact with AR (PubMed:25091737).</text>
</comment>
<comment type="interaction">
    <interactant intactId="EBI-3904603">
        <id>P41223</id>
    </interactant>
    <interactant intactId="EBI-724373">
        <id>Q7L4P6</id>
        <label>BEND5</label>
    </interactant>
    <organismsDiffer>false</organismsDiffer>
    <experiments>3</experiments>
</comment>
<comment type="interaction">
    <interactant intactId="EBI-3904603">
        <id>P41223</id>
    </interactant>
    <interactant intactId="EBI-740785">
        <id>P49639</id>
        <label>HOXA1</label>
    </interactant>
    <organismsDiffer>false</organismsDiffer>
    <experiments>3</experiments>
</comment>
<comment type="interaction">
    <interactant intactId="EBI-3904603">
        <id>P41223</id>
    </interactant>
    <interactant intactId="EBI-10172290">
        <id>P60409</id>
        <label>KRTAP10-7</label>
    </interactant>
    <organismsDiffer>false</organismsDiffer>
    <experiments>6</experiments>
</comment>
<comment type="interaction">
    <interactant intactId="EBI-3904603">
        <id>P41223</id>
    </interactant>
    <interactant intactId="EBI-16439278">
        <id>Q6FHY5</id>
        <label>MEOX2</label>
    </interactant>
    <organismsDiffer>false</organismsDiffer>
    <experiments>3</experiments>
</comment>
<comment type="interaction">
    <interactant intactId="EBI-3904603">
        <id>P41223</id>
    </interactant>
    <interactant intactId="EBI-79165">
        <id>Q9NRD5</id>
        <label>PICK1</label>
    </interactant>
    <organismsDiffer>false</organismsDiffer>
    <experiments>3</experiments>
</comment>
<comment type="subcellular location">
    <subcellularLocation>
        <location evidence="2 3 4">Nucleus</location>
    </subcellularLocation>
    <text evidence="9">Detected in chromatin at the promoter of AR target genes.</text>
</comment>
<comment type="alternative products">
    <event type="alternative splicing"/>
    <isoform>
        <id>P41223-1</id>
        <name>1</name>
        <sequence type="displayed"/>
    </isoform>
    <isoform>
        <id>P41223-2</id>
        <name>2</name>
        <sequence type="described" ref="VSP_055558"/>
    </isoform>
</comment>
<comment type="tissue specificity">
    <text evidence="2">Detected in epithelial and stromal cells in benign prostate hyperplasia tissue (at protein level).</text>
</comment>
<comment type="domain">
    <text evidence="9">Contains a short sequence motif (Phe-Xaa-Xaa-Phe-Tyr) that can bind to AR and may modulate AR activity.</text>
</comment>
<comment type="similarity">
    <text evidence="8">Belongs to the BUD31 (G10) family.</text>
</comment>
<sequence length="144" mass="17000">MPKVKRSRKAPPDGWELIEPTLDELDQKMREAETEPHEGKRKVESLWPIFRIHHQKTRYIFDLFYKRKAISRELYEYCIKEGYADKNLIAKWKKQGYENLCCLRCIQTRDTNFGTNCICRVPKSKLEVGRIIECTHCGCRGCSG</sequence>
<accession>P41223</accession>
<accession>A4D274</accession>
<accession>B7Z4S9</accession>
<accession>D6W5S6</accession>
<accession>Q6IB53</accession>
<accession>Q9UDV1</accession>
<dbReference type="EMBL" id="U11861">
    <property type="protein sequence ID" value="AAA20008.1"/>
    <property type="molecule type" value="mRNA"/>
</dbReference>
<dbReference type="EMBL" id="S77329">
    <property type="protein sequence ID" value="AAB33291.1"/>
    <property type="molecule type" value="mRNA"/>
</dbReference>
<dbReference type="EMBL" id="AK297784">
    <property type="protein sequence ID" value="BAH12665.1"/>
    <property type="molecule type" value="mRNA"/>
</dbReference>
<dbReference type="EMBL" id="AK316477">
    <property type="protein sequence ID" value="BAH14848.1"/>
    <property type="molecule type" value="mRNA"/>
</dbReference>
<dbReference type="EMBL" id="CR456951">
    <property type="protein sequence ID" value="CAG33232.1"/>
    <property type="molecule type" value="mRNA"/>
</dbReference>
<dbReference type="EMBL" id="AC004922">
    <property type="status" value="NOT_ANNOTATED_CDS"/>
    <property type="molecule type" value="Genomic_DNA"/>
</dbReference>
<dbReference type="EMBL" id="CH236956">
    <property type="protein sequence ID" value="EAL23881.1"/>
    <property type="molecule type" value="Genomic_DNA"/>
</dbReference>
<dbReference type="EMBL" id="CH471091">
    <property type="protein sequence ID" value="EAW76670.1"/>
    <property type="molecule type" value="Genomic_DNA"/>
</dbReference>
<dbReference type="EMBL" id="CH471091">
    <property type="protein sequence ID" value="EAW76671.1"/>
    <property type="molecule type" value="Genomic_DNA"/>
</dbReference>
<dbReference type="EMBL" id="CH471091">
    <property type="protein sequence ID" value="EAW76672.1"/>
    <property type="molecule type" value="Genomic_DNA"/>
</dbReference>
<dbReference type="EMBL" id="CH471091">
    <property type="protein sequence ID" value="EAW76673.1"/>
    <property type="molecule type" value="Genomic_DNA"/>
</dbReference>
<dbReference type="EMBL" id="BC022821">
    <property type="protein sequence ID" value="AAH22821.1"/>
    <property type="molecule type" value="mRNA"/>
</dbReference>
<dbReference type="EMBL" id="BC104670">
    <property type="protein sequence ID" value="AAI04671.1"/>
    <property type="molecule type" value="mRNA"/>
</dbReference>
<dbReference type="CCDS" id="CCDS5663.1">
    <molecule id="P41223-1"/>
</dbReference>
<dbReference type="PIR" id="S52131">
    <property type="entry name" value="S52131"/>
</dbReference>
<dbReference type="RefSeq" id="NP_001357336.1">
    <molecule id="P41223-1"/>
    <property type="nucleotide sequence ID" value="NM_001370407.1"/>
</dbReference>
<dbReference type="RefSeq" id="NP_001357339.1">
    <molecule id="P41223-1"/>
    <property type="nucleotide sequence ID" value="NM_001370410.1"/>
</dbReference>
<dbReference type="RefSeq" id="NP_003901.2">
    <molecule id="P41223-1"/>
    <property type="nucleotide sequence ID" value="NM_003910.3"/>
</dbReference>
<dbReference type="RefSeq" id="XP_005250727.1">
    <molecule id="P41223-2"/>
    <property type="nucleotide sequence ID" value="XM_005250670.6"/>
</dbReference>
<dbReference type="RefSeq" id="XP_005250728.1">
    <molecule id="P41223-2"/>
    <property type="nucleotide sequence ID" value="XM_005250671.6"/>
</dbReference>
<dbReference type="RefSeq" id="XP_005250731.1">
    <property type="nucleotide sequence ID" value="XM_005250674.3"/>
</dbReference>
<dbReference type="RefSeq" id="XP_016868249.1">
    <molecule id="P41223-2"/>
    <property type="nucleotide sequence ID" value="XM_017012760.3"/>
</dbReference>
<dbReference type="RefSeq" id="XP_016868250.1">
    <molecule id="P41223-2"/>
    <property type="nucleotide sequence ID" value="XM_017012761.3"/>
</dbReference>
<dbReference type="RefSeq" id="XP_016868251.1">
    <property type="nucleotide sequence ID" value="XM_017012762.1"/>
</dbReference>
<dbReference type="RefSeq" id="XP_047276962.1">
    <molecule id="P41223-1"/>
    <property type="nucleotide sequence ID" value="XM_047421006.1"/>
</dbReference>
<dbReference type="RefSeq" id="XP_054215261.1">
    <molecule id="P41223-2"/>
    <property type="nucleotide sequence ID" value="XM_054359286.1"/>
</dbReference>
<dbReference type="RefSeq" id="XP_054215262.1">
    <molecule id="P41223-2"/>
    <property type="nucleotide sequence ID" value="XM_054359287.1"/>
</dbReference>
<dbReference type="RefSeq" id="XP_054215263.1">
    <molecule id="P41223-2"/>
    <property type="nucleotide sequence ID" value="XM_054359288.1"/>
</dbReference>
<dbReference type="RefSeq" id="XP_054215264.1">
    <molecule id="P41223-2"/>
    <property type="nucleotide sequence ID" value="XM_054359289.1"/>
</dbReference>
<dbReference type="RefSeq" id="XP_054215265.1">
    <molecule id="P41223-1"/>
    <property type="nucleotide sequence ID" value="XM_054359290.1"/>
</dbReference>
<dbReference type="PDB" id="4OED">
    <property type="method" value="X-ray"/>
    <property type="resolution" value="2.79 A"/>
    <property type="chains" value="B=56-70"/>
</dbReference>
<dbReference type="PDB" id="4OH6">
    <property type="method" value="X-ray"/>
    <property type="resolution" value="3.56 A"/>
    <property type="chains" value="B=56-70"/>
</dbReference>
<dbReference type="PDB" id="4OKB">
    <property type="method" value="X-ray"/>
    <property type="resolution" value="2.95 A"/>
    <property type="chains" value="B=56-70"/>
</dbReference>
<dbReference type="PDB" id="5MQF">
    <property type="method" value="EM"/>
    <property type="resolution" value="5.90 A"/>
    <property type="chains" value="Q=1-144"/>
</dbReference>
<dbReference type="PDB" id="5XJC">
    <property type="method" value="EM"/>
    <property type="resolution" value="3.60 A"/>
    <property type="chains" value="N=1-144"/>
</dbReference>
<dbReference type="PDB" id="5YZG">
    <property type="method" value="EM"/>
    <property type="resolution" value="4.10 A"/>
    <property type="chains" value="N=1-144"/>
</dbReference>
<dbReference type="PDB" id="5Z56">
    <property type="method" value="EM"/>
    <property type="resolution" value="5.10 A"/>
    <property type="chains" value="N=1-144"/>
</dbReference>
<dbReference type="PDB" id="5Z57">
    <property type="method" value="EM"/>
    <property type="resolution" value="6.50 A"/>
    <property type="chains" value="N=1-144"/>
</dbReference>
<dbReference type="PDB" id="6FF4">
    <property type="method" value="EM"/>
    <property type="resolution" value="16.00 A"/>
    <property type="chains" value="Q=1-144"/>
</dbReference>
<dbReference type="PDB" id="6FF7">
    <property type="method" value="EM"/>
    <property type="resolution" value="4.50 A"/>
    <property type="chains" value="Q=1-144"/>
</dbReference>
<dbReference type="PDB" id="6ICZ">
    <property type="method" value="EM"/>
    <property type="resolution" value="3.00 A"/>
    <property type="chains" value="N=1-144"/>
</dbReference>
<dbReference type="PDB" id="6ID0">
    <property type="method" value="EM"/>
    <property type="resolution" value="2.90 A"/>
    <property type="chains" value="N=1-144"/>
</dbReference>
<dbReference type="PDB" id="6ID1">
    <property type="method" value="EM"/>
    <property type="resolution" value="2.86 A"/>
    <property type="chains" value="N=1-144"/>
</dbReference>
<dbReference type="PDB" id="6QDV">
    <property type="method" value="EM"/>
    <property type="resolution" value="3.30 A"/>
    <property type="chains" value="L=1-144"/>
</dbReference>
<dbReference type="PDB" id="6ZYM">
    <property type="method" value="EM"/>
    <property type="resolution" value="3.40 A"/>
    <property type="chains" value="Q=1-144"/>
</dbReference>
<dbReference type="PDB" id="7AAV">
    <property type="method" value="EM"/>
    <property type="resolution" value="4.20 A"/>
    <property type="chains" value="Q=1-144"/>
</dbReference>
<dbReference type="PDB" id="7ABF">
    <property type="method" value="EM"/>
    <property type="resolution" value="3.90 A"/>
    <property type="chains" value="Q=1-144"/>
</dbReference>
<dbReference type="PDB" id="7ABG">
    <property type="method" value="EM"/>
    <property type="resolution" value="7.80 A"/>
    <property type="chains" value="Q=1-144"/>
</dbReference>
<dbReference type="PDB" id="7ABI">
    <property type="method" value="EM"/>
    <property type="resolution" value="8.00 A"/>
    <property type="chains" value="Q=1-144"/>
</dbReference>
<dbReference type="PDB" id="7QTT">
    <property type="method" value="EM"/>
    <property type="resolution" value="3.10 A"/>
    <property type="chains" value="T=1-144"/>
</dbReference>
<dbReference type="PDB" id="7W59">
    <property type="method" value="EM"/>
    <property type="resolution" value="3.60 A"/>
    <property type="chains" value="N=1-144"/>
</dbReference>
<dbReference type="PDB" id="7W5A">
    <property type="method" value="EM"/>
    <property type="resolution" value="3.60 A"/>
    <property type="chains" value="N=1-144"/>
</dbReference>
<dbReference type="PDB" id="7W5B">
    <property type="method" value="EM"/>
    <property type="resolution" value="4.30 A"/>
    <property type="chains" value="N=1-144"/>
</dbReference>
<dbReference type="PDB" id="8C6J">
    <property type="method" value="EM"/>
    <property type="resolution" value="2.80 A"/>
    <property type="chains" value="L=1-144"/>
</dbReference>
<dbReference type="PDB" id="8CH6">
    <property type="method" value="EM"/>
    <property type="resolution" value="5.90 A"/>
    <property type="chains" value="T=1-144"/>
</dbReference>
<dbReference type="PDB" id="8I0P">
    <property type="method" value="EM"/>
    <property type="resolution" value="3.40 A"/>
    <property type="chains" value="N=1-144"/>
</dbReference>
<dbReference type="PDB" id="8I0R">
    <property type="method" value="EM"/>
    <property type="resolution" value="3.00 A"/>
    <property type="chains" value="N=1-144"/>
</dbReference>
<dbReference type="PDB" id="8I0S">
    <property type="method" value="EM"/>
    <property type="resolution" value="4.20 A"/>
    <property type="chains" value="N=1-144"/>
</dbReference>
<dbReference type="PDB" id="8I0T">
    <property type="method" value="EM"/>
    <property type="resolution" value="3.00 A"/>
    <property type="chains" value="N=1-144"/>
</dbReference>
<dbReference type="PDB" id="8I0U">
    <property type="method" value="EM"/>
    <property type="resolution" value="3.30 A"/>
    <property type="chains" value="N=1-144"/>
</dbReference>
<dbReference type="PDB" id="8I0V">
    <property type="method" value="EM"/>
    <property type="resolution" value="3.00 A"/>
    <property type="chains" value="N=1-144"/>
</dbReference>
<dbReference type="PDB" id="8I0W">
    <property type="method" value="EM"/>
    <property type="resolution" value="3.40 A"/>
    <property type="chains" value="N=1-144"/>
</dbReference>
<dbReference type="PDB" id="8Q7N">
    <property type="method" value="EM"/>
    <property type="resolution" value="3.10 A"/>
    <property type="chains" value="Q=1-144"/>
</dbReference>
<dbReference type="PDB" id="8QO9">
    <property type="method" value="EM"/>
    <property type="resolution" value="5.29 A"/>
    <property type="chains" value="Q=1-144"/>
</dbReference>
<dbReference type="PDB" id="8RO2">
    <property type="method" value="EM"/>
    <property type="resolution" value="3.50 A"/>
    <property type="chains" value="N=1-144"/>
</dbReference>
<dbReference type="PDB" id="9FMD">
    <property type="method" value="EM"/>
    <property type="resolution" value="3.30 A"/>
    <property type="chains" value="N=1-144"/>
</dbReference>
<dbReference type="PDBsum" id="4OED"/>
<dbReference type="PDBsum" id="4OH6"/>
<dbReference type="PDBsum" id="4OKB"/>
<dbReference type="PDBsum" id="5MQF"/>
<dbReference type="PDBsum" id="5XJC"/>
<dbReference type="PDBsum" id="5YZG"/>
<dbReference type="PDBsum" id="5Z56"/>
<dbReference type="PDBsum" id="5Z57"/>
<dbReference type="PDBsum" id="6FF4"/>
<dbReference type="PDBsum" id="6FF7"/>
<dbReference type="PDBsum" id="6ICZ"/>
<dbReference type="PDBsum" id="6ID0"/>
<dbReference type="PDBsum" id="6ID1"/>
<dbReference type="PDBsum" id="6QDV"/>
<dbReference type="PDBsum" id="6ZYM"/>
<dbReference type="PDBsum" id="7AAV"/>
<dbReference type="PDBsum" id="7ABF"/>
<dbReference type="PDBsum" id="7ABG"/>
<dbReference type="PDBsum" id="7ABI"/>
<dbReference type="PDBsum" id="7QTT"/>
<dbReference type="PDBsum" id="7W59"/>
<dbReference type="PDBsum" id="7W5A"/>
<dbReference type="PDBsum" id="7W5B"/>
<dbReference type="PDBsum" id="8C6J"/>
<dbReference type="PDBsum" id="8CH6"/>
<dbReference type="PDBsum" id="8I0P"/>
<dbReference type="PDBsum" id="8I0R"/>
<dbReference type="PDBsum" id="8I0S"/>
<dbReference type="PDBsum" id="8I0T"/>
<dbReference type="PDBsum" id="8I0U"/>
<dbReference type="PDBsum" id="8I0V"/>
<dbReference type="PDBsum" id="8I0W"/>
<dbReference type="PDBsum" id="8Q7N"/>
<dbReference type="PDBsum" id="8QO9"/>
<dbReference type="PDBsum" id="8RO2"/>
<dbReference type="PDBsum" id="9FMD"/>
<dbReference type="EMDB" id="EMD-11569"/>
<dbReference type="EMDB" id="EMD-11693"/>
<dbReference type="EMDB" id="EMD-11694"/>
<dbReference type="EMDB" id="EMD-11695"/>
<dbReference type="EMDB" id="EMD-11697"/>
<dbReference type="EMDB" id="EMD-14146"/>
<dbReference type="EMDB" id="EMD-16452"/>
<dbReference type="EMDB" id="EMD-16658"/>
<dbReference type="EMDB" id="EMD-18225"/>
<dbReference type="EMDB" id="EMD-18529"/>
<dbReference type="EMDB" id="EMD-19399"/>
<dbReference type="EMDB" id="EMD-32317"/>
<dbReference type="EMDB" id="EMD-32319"/>
<dbReference type="EMDB" id="EMD-32321"/>
<dbReference type="EMDB" id="EMD-35105"/>
<dbReference type="EMDB" id="EMD-35107"/>
<dbReference type="EMDB" id="EMD-35108"/>
<dbReference type="EMDB" id="EMD-35109"/>
<dbReference type="EMDB" id="EMD-35110"/>
<dbReference type="EMDB" id="EMD-35111"/>
<dbReference type="EMDB" id="EMD-35113"/>
<dbReference type="EMDB" id="EMD-3545"/>
<dbReference type="EMDB" id="EMD-4255"/>
<dbReference type="EMDB" id="EMD-4525"/>
<dbReference type="EMDB" id="EMD-6721"/>
<dbReference type="EMDB" id="EMD-6864"/>
<dbReference type="EMDB" id="EMD-6889"/>
<dbReference type="EMDB" id="EMD-6890"/>
<dbReference type="EMDB" id="EMD-9645"/>
<dbReference type="EMDB" id="EMD-9646"/>
<dbReference type="EMDB" id="EMD-9647"/>
<dbReference type="SMR" id="P41223"/>
<dbReference type="BioGRID" id="114413">
    <property type="interactions" value="119"/>
</dbReference>
<dbReference type="CORUM" id="P41223"/>
<dbReference type="FunCoup" id="P41223">
    <property type="interactions" value="3235"/>
</dbReference>
<dbReference type="IntAct" id="P41223">
    <property type="interactions" value="58"/>
</dbReference>
<dbReference type="MINT" id="P41223"/>
<dbReference type="STRING" id="9606.ENSP00000386023"/>
<dbReference type="GlyGen" id="P41223">
    <property type="glycosylation" value="1 site, 1 O-linked glycan (1 site)"/>
</dbReference>
<dbReference type="iPTMnet" id="P41223"/>
<dbReference type="PhosphoSitePlus" id="P41223"/>
<dbReference type="SwissPalm" id="P41223"/>
<dbReference type="BioMuta" id="BUD31"/>
<dbReference type="jPOST" id="P41223"/>
<dbReference type="MassIVE" id="P41223"/>
<dbReference type="PaxDb" id="9606-ENSP00000386023"/>
<dbReference type="PeptideAtlas" id="P41223"/>
<dbReference type="ProteomicsDB" id="55432">
    <molecule id="P41223-1"/>
</dbReference>
<dbReference type="Pumba" id="P41223"/>
<dbReference type="Antibodypedia" id="16150">
    <property type="antibodies" value="239 antibodies from 29 providers"/>
</dbReference>
<dbReference type="DNASU" id="8896"/>
<dbReference type="Ensembl" id="ENST00000222969.10">
    <molecule id="P41223-1"/>
    <property type="protein sequence ID" value="ENSP00000222969.5"/>
    <property type="gene ID" value="ENSG00000106245.11"/>
</dbReference>
<dbReference type="Ensembl" id="ENST00000403633.6">
    <molecule id="P41223-1"/>
    <property type="protein sequence ID" value="ENSP00000386023.2"/>
    <property type="gene ID" value="ENSG00000106245.11"/>
</dbReference>
<dbReference type="GeneID" id="8896"/>
<dbReference type="KEGG" id="hsa:8896"/>
<dbReference type="MANE-Select" id="ENST00000222969.10">
    <property type="protein sequence ID" value="ENSP00000222969.5"/>
    <property type="RefSeq nucleotide sequence ID" value="NM_003910.4"/>
    <property type="RefSeq protein sequence ID" value="NP_003901.2"/>
</dbReference>
<dbReference type="UCSC" id="uc003uqf.4">
    <molecule id="P41223-1"/>
    <property type="organism name" value="human"/>
</dbReference>
<dbReference type="AGR" id="HGNC:29629"/>
<dbReference type="CTD" id="8896"/>
<dbReference type="DisGeNET" id="8896"/>
<dbReference type="GeneCards" id="BUD31"/>
<dbReference type="HGNC" id="HGNC:29629">
    <property type="gene designation" value="BUD31"/>
</dbReference>
<dbReference type="HPA" id="ENSG00000106245">
    <property type="expression patterns" value="Low tissue specificity"/>
</dbReference>
<dbReference type="MIM" id="603477">
    <property type="type" value="gene"/>
</dbReference>
<dbReference type="neXtProt" id="NX_P41223"/>
<dbReference type="OpenTargets" id="ENSG00000106245"/>
<dbReference type="PharmGKB" id="PA144596513"/>
<dbReference type="VEuPathDB" id="HostDB:ENSG00000106245"/>
<dbReference type="eggNOG" id="KOG3404">
    <property type="taxonomic scope" value="Eukaryota"/>
</dbReference>
<dbReference type="GeneTree" id="ENSGT00390000014300"/>
<dbReference type="InParanoid" id="P41223"/>
<dbReference type="OMA" id="FGTSCIC"/>
<dbReference type="OrthoDB" id="277109at2759"/>
<dbReference type="PAN-GO" id="P41223">
    <property type="GO annotations" value="2 GO annotations based on evolutionary models"/>
</dbReference>
<dbReference type="PhylomeDB" id="P41223"/>
<dbReference type="TreeFam" id="TF105609"/>
<dbReference type="PathwayCommons" id="P41223"/>
<dbReference type="Reactome" id="R-HSA-72163">
    <property type="pathway name" value="mRNA Splicing - Major Pathway"/>
</dbReference>
<dbReference type="SignaLink" id="P41223"/>
<dbReference type="BioGRID-ORCS" id="8896">
    <property type="hits" value="818 hits in 1131 CRISPR screens"/>
</dbReference>
<dbReference type="ChiTaRS" id="BUD31">
    <property type="organism name" value="human"/>
</dbReference>
<dbReference type="EvolutionaryTrace" id="P41223"/>
<dbReference type="GenomeRNAi" id="8896"/>
<dbReference type="Pharos" id="P41223">
    <property type="development level" value="Tbio"/>
</dbReference>
<dbReference type="PRO" id="PR:P41223"/>
<dbReference type="Proteomes" id="UP000005640">
    <property type="component" value="Chromosome 7"/>
</dbReference>
<dbReference type="RNAct" id="P41223">
    <property type="molecule type" value="protein"/>
</dbReference>
<dbReference type="Bgee" id="ENSG00000106245">
    <property type="expression patterns" value="Expressed in olfactory segment of nasal mucosa and 211 other cell types or tissues"/>
</dbReference>
<dbReference type="ExpressionAtlas" id="P41223">
    <property type="expression patterns" value="baseline and differential"/>
</dbReference>
<dbReference type="GO" id="GO:0005813">
    <property type="term" value="C:centrosome"/>
    <property type="evidence" value="ECO:0000314"/>
    <property type="project" value="HPA"/>
</dbReference>
<dbReference type="GO" id="GO:0000785">
    <property type="term" value="C:chromatin"/>
    <property type="evidence" value="ECO:0000314"/>
    <property type="project" value="UniProtKB"/>
</dbReference>
<dbReference type="GO" id="GO:0015630">
    <property type="term" value="C:microtubule cytoskeleton"/>
    <property type="evidence" value="ECO:0000314"/>
    <property type="project" value="HPA"/>
</dbReference>
<dbReference type="GO" id="GO:0005654">
    <property type="term" value="C:nucleoplasm"/>
    <property type="evidence" value="ECO:0000314"/>
    <property type="project" value="HPA"/>
</dbReference>
<dbReference type="GO" id="GO:0005634">
    <property type="term" value="C:nucleus"/>
    <property type="evidence" value="ECO:0000314"/>
    <property type="project" value="UniProtKB"/>
</dbReference>
<dbReference type="GO" id="GO:0005681">
    <property type="term" value="C:spliceosomal complex"/>
    <property type="evidence" value="ECO:0000318"/>
    <property type="project" value="GO_Central"/>
</dbReference>
<dbReference type="GO" id="GO:0071007">
    <property type="term" value="C:U2-type catalytic step 2 spliceosome"/>
    <property type="evidence" value="ECO:0000314"/>
    <property type="project" value="UniProtKB"/>
</dbReference>
<dbReference type="GO" id="GO:0016922">
    <property type="term" value="F:nuclear receptor binding"/>
    <property type="evidence" value="ECO:0000314"/>
    <property type="project" value="UniProtKB"/>
</dbReference>
<dbReference type="GO" id="GO:0003713">
    <property type="term" value="F:transcription coactivator activity"/>
    <property type="evidence" value="ECO:0000314"/>
    <property type="project" value="UniProtKB"/>
</dbReference>
<dbReference type="GO" id="GO:0000398">
    <property type="term" value="P:mRNA splicing, via spliceosome"/>
    <property type="evidence" value="ECO:0000314"/>
    <property type="project" value="UniProtKB"/>
</dbReference>
<dbReference type="InterPro" id="IPR001748">
    <property type="entry name" value="BUD31"/>
</dbReference>
<dbReference type="InterPro" id="IPR018230">
    <property type="entry name" value="BUD31/G10-rel_CS"/>
</dbReference>
<dbReference type="PANTHER" id="PTHR19411:SF0">
    <property type="entry name" value="PROTEIN BUD31 HOMOLOG"/>
    <property type="match status" value="1"/>
</dbReference>
<dbReference type="PANTHER" id="PTHR19411">
    <property type="entry name" value="PROTEIN BUD31-RELATED"/>
    <property type="match status" value="1"/>
</dbReference>
<dbReference type="Pfam" id="PF01125">
    <property type="entry name" value="BUD31"/>
    <property type="match status" value="1"/>
</dbReference>
<dbReference type="PRINTS" id="PR00322">
    <property type="entry name" value="G10"/>
</dbReference>
<dbReference type="PROSITE" id="PS00997">
    <property type="entry name" value="G10_1"/>
    <property type="match status" value="1"/>
</dbReference>
<dbReference type="PROSITE" id="PS00998">
    <property type="entry name" value="G10_2"/>
    <property type="match status" value="1"/>
</dbReference>